<comment type="function">
    <text evidence="2 4 5">Catalyzes the last step in biosynthesis of uridine diphosphate-N-acetylglucosamine (UDP-GlcNAc) by converting UTP and glucosamine 1-phosphate (GlcNAc-1-P) to the sugar nucleotide (PubMed:9603950, PubMed:9765219). Also converts UTP and galactosamine 1-phosphate (GalNAc-1-P) into uridine diphosphate-N-acetylgalactosamine (UDP-GalNAc) (PubMed:9765219). In addition to its role in metabolism, acts as a regulator of innate immunity in response to virus infection by mediating pyrophosphorylation of IRF3: catalyzes pyrophosphorylation of IRF3 phosphorylated at 'Ser-386' by TBK1, promoting IRF3 dimerization and activation, leading to type I interferon responses (PubMed:36603579).</text>
</comment>
<comment type="function">
    <molecule>Isoform AGX1</molecule>
    <text evidence="5">Isoform AGX1 has 2 to 3 times higher activity towards galactosamine 1-phosphate (GalNAc-1-P).</text>
</comment>
<comment type="function">
    <molecule>Isoform AGX1</molecule>
    <text evidence="5">Isoform AGX2 has 8 times more activity towards glucosamine 1-phosphate (GlcNAc-1-P).</text>
</comment>
<comment type="catalytic activity">
    <reaction evidence="5">
        <text>N-acetyl-alpha-D-galactosamine 1-phosphate + UTP + H(+) = UDP-N-acetyl-alpha-D-galactosamine + diphosphate</text>
        <dbReference type="Rhea" id="RHEA:34363"/>
        <dbReference type="ChEBI" id="CHEBI:15378"/>
        <dbReference type="ChEBI" id="CHEBI:33019"/>
        <dbReference type="ChEBI" id="CHEBI:46398"/>
        <dbReference type="ChEBI" id="CHEBI:61970"/>
        <dbReference type="ChEBI" id="CHEBI:67138"/>
        <dbReference type="EC" id="2.7.7.83"/>
    </reaction>
    <physiologicalReaction direction="left-to-right" evidence="5">
        <dbReference type="Rhea" id="RHEA:34364"/>
    </physiologicalReaction>
</comment>
<comment type="catalytic activity">
    <reaction evidence="4 5">
        <text>N-acetyl-alpha-D-glucosamine 1-phosphate + UTP + H(+) = UDP-N-acetyl-alpha-D-glucosamine + diphosphate</text>
        <dbReference type="Rhea" id="RHEA:13509"/>
        <dbReference type="ChEBI" id="CHEBI:15378"/>
        <dbReference type="ChEBI" id="CHEBI:33019"/>
        <dbReference type="ChEBI" id="CHEBI:46398"/>
        <dbReference type="ChEBI" id="CHEBI:57705"/>
        <dbReference type="ChEBI" id="CHEBI:57776"/>
        <dbReference type="EC" id="2.7.7.23"/>
    </reaction>
    <physiologicalReaction direction="left-to-right" evidence="4 5">
        <dbReference type="Rhea" id="RHEA:13510"/>
    </physiologicalReaction>
</comment>
<comment type="catalytic activity">
    <reaction evidence="2">
        <text>5-diphospho-1D-myo-inositol 1,2,3,4,6-pentakisphosphate + O-phospho-L-seryl-[protein] = O-diphospho-L-seryl-[protein] + 1D-myo-inositol hexakisphosphate</text>
        <dbReference type="Rhea" id="RHEA:64104"/>
        <dbReference type="Rhea" id="RHEA-COMP:11604"/>
        <dbReference type="Rhea" id="RHEA-COMP:16509"/>
        <dbReference type="ChEBI" id="CHEBI:58130"/>
        <dbReference type="ChEBI" id="CHEBI:58628"/>
        <dbReference type="ChEBI" id="CHEBI:83421"/>
        <dbReference type="ChEBI" id="CHEBI:149682"/>
    </reaction>
    <physiologicalReaction direction="left-to-right" evidence="2">
        <dbReference type="Rhea" id="RHEA:64105"/>
    </physiologicalReaction>
</comment>
<comment type="pathway">
    <text evidence="4 5">Nucleotide-sugar biosynthesis; UDP-N-acetyl-alpha-D-glucosamine biosynthesis; UDP-N-acetyl-alpha-D-glucosamine from N-acetyl-alpha-D-glucosamine 1-phosphate: step 1/1.</text>
</comment>
<comment type="subunit">
    <text evidence="5">Monomer and homodimer.</text>
</comment>
<comment type="subunit">
    <molecule>Isoform AGX1</molecule>
    <text evidence="5">Homodimer.</text>
</comment>
<comment type="subunit">
    <molecule>Isoform AGX2</molecule>
    <text evidence="5">Homodimer.</text>
</comment>
<comment type="interaction">
    <interactant intactId="EBI-10237564">
        <id>Q16222</id>
    </interactant>
    <interactant intactId="EBI-10237564">
        <id>Q16222</id>
        <label>UAP1</label>
    </interactant>
    <organismsDiffer>false</organismsDiffer>
    <experiments>3</experiments>
</comment>
<comment type="interaction">
    <interactant intactId="EBI-12293309">
        <id>Q16222-2</id>
    </interactant>
    <interactant intactId="EBI-12293309">
        <id>Q16222-2</id>
        <label>UAP1</label>
    </interactant>
    <organismsDiffer>false</organismsDiffer>
    <experiments>3</experiments>
</comment>
<comment type="subcellular location">
    <subcellularLocation>
        <location evidence="3">Cytoplasm</location>
        <location evidence="3">Cytosol</location>
    </subcellularLocation>
    <text evidence="3">In spermatozoa, localized to the principal piece of the tail, the neck region of the head and to a lesser extent, the midpiece of the tail.</text>
</comment>
<comment type="alternative products">
    <event type="alternative splicing"/>
    <isoform>
        <id>Q16222-1</id>
        <name evidence="8">AGX2</name>
        <name evidence="8">AGX-2</name>
        <sequence type="displayed"/>
    </isoform>
    <isoform>
        <id>Q16222-2</id>
        <name evidence="8">AGX1</name>
        <name evidence="8">AGX-1</name>
        <sequence type="described" ref="VSP_004483"/>
    </isoform>
    <isoform>
        <id>Q16222-3</id>
        <name>3</name>
        <sequence type="described" ref="VSP_014523"/>
    </isoform>
</comment>
<comment type="tissue specificity">
    <text evidence="3">Widely expressed (PubMed:8025165). Expressed at low level in placenta, muscle and liver (PubMed:8025165).</text>
</comment>
<comment type="tissue specificity">
    <molecule>Isoform AGX1</molecule>
    <text evidence="3">Isoform AGX1 is more abundant in testis than isoform AGX2, while isoform AGX2 is more abundant than isoform AGX1 in somatic tissue.</text>
</comment>
<comment type="tissue specificity">
    <molecule>Isoform AGX2</molecule>
    <text evidence="3">Isoform AGX2 is more abundant than isoform AGX1 in somatic tissue.</text>
</comment>
<comment type="similarity">
    <text evidence="10">Belongs to the UDPGP type 1 family.</text>
</comment>
<keyword id="KW-0002">3D-structure</keyword>
<keyword id="KW-0025">Alternative splicing</keyword>
<keyword id="KW-0963">Cytoplasm</keyword>
<keyword id="KW-0903">Direct protein sequencing</keyword>
<keyword id="KW-0391">Immunity</keyword>
<keyword id="KW-0399">Innate immunity</keyword>
<keyword id="KW-0548">Nucleotidyltransferase</keyword>
<keyword id="KW-1267">Proteomics identification</keyword>
<keyword id="KW-1185">Reference proteome</keyword>
<keyword id="KW-0808">Transferase</keyword>
<reference key="1">
    <citation type="journal article" date="1994" name="Biol. Reprod.">
        <title>Characterization of a human antigen with sera from infertile patients.</title>
        <authorList>
            <person name="Diekman A.B."/>
            <person name="Goldberg E."/>
        </authorList>
    </citation>
    <scope>NUCLEOTIDE SEQUENCE [MRNA] (ISOFORMS AGX1 AND AGX2)</scope>
    <scope>SUBCELLULAR LOCATION</scope>
    <scope>TISSUE SPECIFICITY</scope>
    <source>
        <tissue>Testis</tissue>
    </source>
</reference>
<reference key="2">
    <citation type="journal article" date="1998" name="J. Biol. Chem.">
        <title>The eukaryotic UDP-N-acetylglucosamine pyrophosphorylases: gene cloning, protein expression, and catalytic mechanism.</title>
        <authorList>
            <person name="Mio T."/>
            <person name="Yabe T."/>
            <person name="Arisawa M."/>
            <person name="Yamada-Okabe H."/>
        </authorList>
    </citation>
    <scope>NUCLEOTIDE SEQUENCE [MRNA] (ISOFORM AGX1)</scope>
    <scope>FUNCTION</scope>
    <scope>PATHWAY</scope>
    <scope>CATALYTIC ACTIVITY</scope>
    <source>
        <tissue>Testis</tissue>
    </source>
</reference>
<reference key="3">
    <citation type="journal article" date="2004" name="Nat. Genet.">
        <title>Complete sequencing and characterization of 21,243 full-length human cDNAs.</title>
        <authorList>
            <person name="Ota T."/>
            <person name="Suzuki Y."/>
            <person name="Nishikawa T."/>
            <person name="Otsuki T."/>
            <person name="Sugiyama T."/>
            <person name="Irie R."/>
            <person name="Wakamatsu A."/>
            <person name="Hayashi K."/>
            <person name="Sato H."/>
            <person name="Nagai K."/>
            <person name="Kimura K."/>
            <person name="Makita H."/>
            <person name="Sekine M."/>
            <person name="Obayashi M."/>
            <person name="Nishi T."/>
            <person name="Shibahara T."/>
            <person name="Tanaka T."/>
            <person name="Ishii S."/>
            <person name="Yamamoto J."/>
            <person name="Saito K."/>
            <person name="Kawai Y."/>
            <person name="Isono Y."/>
            <person name="Nakamura Y."/>
            <person name="Nagahari K."/>
            <person name="Murakami K."/>
            <person name="Yasuda T."/>
            <person name="Iwayanagi T."/>
            <person name="Wagatsuma M."/>
            <person name="Shiratori A."/>
            <person name="Sudo H."/>
            <person name="Hosoiri T."/>
            <person name="Kaku Y."/>
            <person name="Kodaira H."/>
            <person name="Kondo H."/>
            <person name="Sugawara M."/>
            <person name="Takahashi M."/>
            <person name="Kanda K."/>
            <person name="Yokoi T."/>
            <person name="Furuya T."/>
            <person name="Kikkawa E."/>
            <person name="Omura Y."/>
            <person name="Abe K."/>
            <person name="Kamihara K."/>
            <person name="Katsuta N."/>
            <person name="Sato K."/>
            <person name="Tanikawa M."/>
            <person name="Yamazaki M."/>
            <person name="Ninomiya K."/>
            <person name="Ishibashi T."/>
            <person name="Yamashita H."/>
            <person name="Murakawa K."/>
            <person name="Fujimori K."/>
            <person name="Tanai H."/>
            <person name="Kimata M."/>
            <person name="Watanabe M."/>
            <person name="Hiraoka S."/>
            <person name="Chiba Y."/>
            <person name="Ishida S."/>
            <person name="Ono Y."/>
            <person name="Takiguchi S."/>
            <person name="Watanabe S."/>
            <person name="Yosida M."/>
            <person name="Hotuta T."/>
            <person name="Kusano J."/>
            <person name="Kanehori K."/>
            <person name="Takahashi-Fujii A."/>
            <person name="Hara H."/>
            <person name="Tanase T.-O."/>
            <person name="Nomura Y."/>
            <person name="Togiya S."/>
            <person name="Komai F."/>
            <person name="Hara R."/>
            <person name="Takeuchi K."/>
            <person name="Arita M."/>
            <person name="Imose N."/>
            <person name="Musashino K."/>
            <person name="Yuuki H."/>
            <person name="Oshima A."/>
            <person name="Sasaki N."/>
            <person name="Aotsuka S."/>
            <person name="Yoshikawa Y."/>
            <person name="Matsunawa H."/>
            <person name="Ichihara T."/>
            <person name="Shiohata N."/>
            <person name="Sano S."/>
            <person name="Moriya S."/>
            <person name="Momiyama H."/>
            <person name="Satoh N."/>
            <person name="Takami S."/>
            <person name="Terashima Y."/>
            <person name="Suzuki O."/>
            <person name="Nakagawa S."/>
            <person name="Senoh A."/>
            <person name="Mizoguchi H."/>
            <person name="Goto Y."/>
            <person name="Shimizu F."/>
            <person name="Wakebe H."/>
            <person name="Hishigaki H."/>
            <person name="Watanabe T."/>
            <person name="Sugiyama A."/>
            <person name="Takemoto M."/>
            <person name="Kawakami B."/>
            <person name="Yamazaki M."/>
            <person name="Watanabe K."/>
            <person name="Kumagai A."/>
            <person name="Itakura S."/>
            <person name="Fukuzumi Y."/>
            <person name="Fujimori Y."/>
            <person name="Komiyama M."/>
            <person name="Tashiro H."/>
            <person name="Tanigami A."/>
            <person name="Fujiwara T."/>
            <person name="Ono T."/>
            <person name="Yamada K."/>
            <person name="Fujii Y."/>
            <person name="Ozaki K."/>
            <person name="Hirao M."/>
            <person name="Ohmori Y."/>
            <person name="Kawabata A."/>
            <person name="Hikiji T."/>
            <person name="Kobatake N."/>
            <person name="Inagaki H."/>
            <person name="Ikema Y."/>
            <person name="Okamoto S."/>
            <person name="Okitani R."/>
            <person name="Kawakami T."/>
            <person name="Noguchi S."/>
            <person name="Itoh T."/>
            <person name="Shigeta K."/>
            <person name="Senba T."/>
            <person name="Matsumura K."/>
            <person name="Nakajima Y."/>
            <person name="Mizuno T."/>
            <person name="Morinaga M."/>
            <person name="Sasaki M."/>
            <person name="Togashi T."/>
            <person name="Oyama M."/>
            <person name="Hata H."/>
            <person name="Watanabe M."/>
            <person name="Komatsu T."/>
            <person name="Mizushima-Sugano J."/>
            <person name="Satoh T."/>
            <person name="Shirai Y."/>
            <person name="Takahashi Y."/>
            <person name="Nakagawa K."/>
            <person name="Okumura K."/>
            <person name="Nagase T."/>
            <person name="Nomura N."/>
            <person name="Kikuchi H."/>
            <person name="Masuho Y."/>
            <person name="Yamashita R."/>
            <person name="Nakai K."/>
            <person name="Yada T."/>
            <person name="Nakamura Y."/>
            <person name="Ohara O."/>
            <person name="Isogai T."/>
            <person name="Sugano S."/>
        </authorList>
    </citation>
    <scope>NUCLEOTIDE SEQUENCE [LARGE SCALE MRNA] (ISOFORM AGX1)</scope>
</reference>
<reference key="4">
    <citation type="journal article" date="2006" name="Nature">
        <title>The DNA sequence and biological annotation of human chromosome 1.</title>
        <authorList>
            <person name="Gregory S.G."/>
            <person name="Barlow K.F."/>
            <person name="McLay K.E."/>
            <person name="Kaul R."/>
            <person name="Swarbreck D."/>
            <person name="Dunham A."/>
            <person name="Scott C.E."/>
            <person name="Howe K.L."/>
            <person name="Woodfine K."/>
            <person name="Spencer C.C.A."/>
            <person name="Jones M.C."/>
            <person name="Gillson C."/>
            <person name="Searle S."/>
            <person name="Zhou Y."/>
            <person name="Kokocinski F."/>
            <person name="McDonald L."/>
            <person name="Evans R."/>
            <person name="Phillips K."/>
            <person name="Atkinson A."/>
            <person name="Cooper R."/>
            <person name="Jones C."/>
            <person name="Hall R.E."/>
            <person name="Andrews T.D."/>
            <person name="Lloyd C."/>
            <person name="Ainscough R."/>
            <person name="Almeida J.P."/>
            <person name="Ambrose K.D."/>
            <person name="Anderson F."/>
            <person name="Andrew R.W."/>
            <person name="Ashwell R.I.S."/>
            <person name="Aubin K."/>
            <person name="Babbage A.K."/>
            <person name="Bagguley C.L."/>
            <person name="Bailey J."/>
            <person name="Beasley H."/>
            <person name="Bethel G."/>
            <person name="Bird C.P."/>
            <person name="Bray-Allen S."/>
            <person name="Brown J.Y."/>
            <person name="Brown A.J."/>
            <person name="Buckley D."/>
            <person name="Burton J."/>
            <person name="Bye J."/>
            <person name="Carder C."/>
            <person name="Chapman J.C."/>
            <person name="Clark S.Y."/>
            <person name="Clarke G."/>
            <person name="Clee C."/>
            <person name="Cobley V."/>
            <person name="Collier R.E."/>
            <person name="Corby N."/>
            <person name="Coville G.J."/>
            <person name="Davies J."/>
            <person name="Deadman R."/>
            <person name="Dunn M."/>
            <person name="Earthrowl M."/>
            <person name="Ellington A.G."/>
            <person name="Errington H."/>
            <person name="Frankish A."/>
            <person name="Frankland J."/>
            <person name="French L."/>
            <person name="Garner P."/>
            <person name="Garnett J."/>
            <person name="Gay L."/>
            <person name="Ghori M.R.J."/>
            <person name="Gibson R."/>
            <person name="Gilby L.M."/>
            <person name="Gillett W."/>
            <person name="Glithero R.J."/>
            <person name="Grafham D.V."/>
            <person name="Griffiths C."/>
            <person name="Griffiths-Jones S."/>
            <person name="Grocock R."/>
            <person name="Hammond S."/>
            <person name="Harrison E.S.I."/>
            <person name="Hart E."/>
            <person name="Haugen E."/>
            <person name="Heath P.D."/>
            <person name="Holmes S."/>
            <person name="Holt K."/>
            <person name="Howden P.J."/>
            <person name="Hunt A.R."/>
            <person name="Hunt S.E."/>
            <person name="Hunter G."/>
            <person name="Isherwood J."/>
            <person name="James R."/>
            <person name="Johnson C."/>
            <person name="Johnson D."/>
            <person name="Joy A."/>
            <person name="Kay M."/>
            <person name="Kershaw J.K."/>
            <person name="Kibukawa M."/>
            <person name="Kimberley A.M."/>
            <person name="King A."/>
            <person name="Knights A.J."/>
            <person name="Lad H."/>
            <person name="Laird G."/>
            <person name="Lawlor S."/>
            <person name="Leongamornlert D.A."/>
            <person name="Lloyd D.M."/>
            <person name="Loveland J."/>
            <person name="Lovell J."/>
            <person name="Lush M.J."/>
            <person name="Lyne R."/>
            <person name="Martin S."/>
            <person name="Mashreghi-Mohammadi M."/>
            <person name="Matthews L."/>
            <person name="Matthews N.S.W."/>
            <person name="McLaren S."/>
            <person name="Milne S."/>
            <person name="Mistry S."/>
            <person name="Moore M.J.F."/>
            <person name="Nickerson T."/>
            <person name="O'Dell C.N."/>
            <person name="Oliver K."/>
            <person name="Palmeiri A."/>
            <person name="Palmer S.A."/>
            <person name="Parker A."/>
            <person name="Patel D."/>
            <person name="Pearce A.V."/>
            <person name="Peck A.I."/>
            <person name="Pelan S."/>
            <person name="Phelps K."/>
            <person name="Phillimore B.J."/>
            <person name="Plumb R."/>
            <person name="Rajan J."/>
            <person name="Raymond C."/>
            <person name="Rouse G."/>
            <person name="Saenphimmachak C."/>
            <person name="Sehra H.K."/>
            <person name="Sheridan E."/>
            <person name="Shownkeen R."/>
            <person name="Sims S."/>
            <person name="Skuce C.D."/>
            <person name="Smith M."/>
            <person name="Steward C."/>
            <person name="Subramanian S."/>
            <person name="Sycamore N."/>
            <person name="Tracey A."/>
            <person name="Tromans A."/>
            <person name="Van Helmond Z."/>
            <person name="Wall M."/>
            <person name="Wallis J.M."/>
            <person name="White S."/>
            <person name="Whitehead S.L."/>
            <person name="Wilkinson J.E."/>
            <person name="Willey D.L."/>
            <person name="Williams H."/>
            <person name="Wilming L."/>
            <person name="Wray P.W."/>
            <person name="Wu Z."/>
            <person name="Coulson A."/>
            <person name="Vaudin M."/>
            <person name="Sulston J.E."/>
            <person name="Durbin R.M."/>
            <person name="Hubbard T."/>
            <person name="Wooster R."/>
            <person name="Dunham I."/>
            <person name="Carter N.P."/>
            <person name="McVean G."/>
            <person name="Ross M.T."/>
            <person name="Harrow J."/>
            <person name="Olson M.V."/>
            <person name="Beck S."/>
            <person name="Rogers J."/>
            <person name="Bentley D.R."/>
        </authorList>
    </citation>
    <scope>NUCLEOTIDE SEQUENCE [LARGE SCALE GENOMIC DNA] (ISOFORMS AGX1; AGX2 AND 3)</scope>
</reference>
<reference key="5">
    <citation type="submission" date="2005-07" db="EMBL/GenBank/DDBJ databases">
        <authorList>
            <person name="Mural R.J."/>
            <person name="Istrail S."/>
            <person name="Sutton G.G."/>
            <person name="Florea L."/>
            <person name="Halpern A.L."/>
            <person name="Mobarry C.M."/>
            <person name="Lippert R."/>
            <person name="Walenz B."/>
            <person name="Shatkay H."/>
            <person name="Dew I."/>
            <person name="Miller J.R."/>
            <person name="Flanigan M.J."/>
            <person name="Edwards N.J."/>
            <person name="Bolanos R."/>
            <person name="Fasulo D."/>
            <person name="Halldorsson B.V."/>
            <person name="Hannenhalli S."/>
            <person name="Turner R."/>
            <person name="Yooseph S."/>
            <person name="Lu F."/>
            <person name="Nusskern D.R."/>
            <person name="Shue B.C."/>
            <person name="Zheng X.H."/>
            <person name="Zhong F."/>
            <person name="Delcher A.L."/>
            <person name="Huson D.H."/>
            <person name="Kravitz S.A."/>
            <person name="Mouchard L."/>
            <person name="Reinert K."/>
            <person name="Remington K.A."/>
            <person name="Clark A.G."/>
            <person name="Waterman M.S."/>
            <person name="Eichler E.E."/>
            <person name="Adams M.D."/>
            <person name="Hunkapiller M.W."/>
            <person name="Myers E.W."/>
            <person name="Venter J.C."/>
        </authorList>
    </citation>
    <scope>NUCLEOTIDE SEQUENCE [LARGE SCALE GENOMIC DNA]</scope>
</reference>
<reference key="6">
    <citation type="journal article" date="2004" name="Genome Res.">
        <title>The status, quality, and expansion of the NIH full-length cDNA project: the Mammalian Gene Collection (MGC).</title>
        <authorList>
            <consortium name="The MGC Project Team"/>
        </authorList>
    </citation>
    <scope>NUCLEOTIDE SEQUENCE [LARGE SCALE MRNA] (ISOFORM AGX1)</scope>
    <source>
        <tissue>Muscle</tissue>
    </source>
</reference>
<reference key="7">
    <citation type="journal article" date="1998" name="J. Biol. Chem.">
        <title>A 17-amino acid insert changes UDP-N-acetylhexosamine pyrophosphorylase specificity from UDP-GalNAc to UDP-GlcNAc.</title>
        <authorList>
            <person name="Wang-Gillam A."/>
            <person name="Pastuszak I."/>
            <person name="Elbein A.D."/>
        </authorList>
    </citation>
    <scope>PARTIAL PROTEIN SEQUENCE</scope>
    <scope>ALTERNATIVE SPLICING</scope>
    <scope>FUNCTION</scope>
    <scope>CATALYTIC ACTIVITY</scope>
    <scope>PATHWAY</scope>
    <scope>SUBUNIT</scope>
    <source>
        <tissue>Mammary cancer</tissue>
    </source>
</reference>
<reference key="8">
    <citation type="journal article" date="2011" name="BMC Syst. Biol.">
        <title>Initial characterization of the human central proteome.</title>
        <authorList>
            <person name="Burkard T.R."/>
            <person name="Planyavsky M."/>
            <person name="Kaupe I."/>
            <person name="Breitwieser F.P."/>
            <person name="Buerckstuemmer T."/>
            <person name="Bennett K.L."/>
            <person name="Superti-Furga G."/>
            <person name="Colinge J."/>
        </authorList>
    </citation>
    <scope>IDENTIFICATION BY MASS SPECTROMETRY [LARGE SCALE ANALYSIS]</scope>
</reference>
<reference key="9">
    <citation type="journal article" date="2014" name="J. Proteomics">
        <title>An enzyme assisted RP-RPLC approach for in-depth analysis of human liver phosphoproteome.</title>
        <authorList>
            <person name="Bian Y."/>
            <person name="Song C."/>
            <person name="Cheng K."/>
            <person name="Dong M."/>
            <person name="Wang F."/>
            <person name="Huang J."/>
            <person name="Sun D."/>
            <person name="Wang L."/>
            <person name="Ye M."/>
            <person name="Zou H."/>
        </authorList>
    </citation>
    <scope>IDENTIFICATION BY MASS SPECTROMETRY [LARGE SCALE ANALYSIS]</scope>
    <source>
        <tissue>Liver</tissue>
    </source>
</reference>
<reference key="10">
    <citation type="journal article" date="2023" name="Mol. Cell">
        <title>Metabolic enzyme UAP1 mediates IRF3 pyrophosphorylation to facilitate innate immune response.</title>
        <authorList>
            <person name="Yang S."/>
            <person name="Jin S."/>
            <person name="Xian H."/>
            <person name="Zhao Z."/>
            <person name="Wang L."/>
            <person name="Wu Y."/>
            <person name="Zhou L."/>
            <person name="Li M."/>
            <person name="Cui J."/>
        </authorList>
    </citation>
    <scope>FUNCTION</scope>
    <scope>CATALYTIC ACTIVITY</scope>
    <scope>MUTAGENESIS OF 115-ARG--LYS-122; LYS-407 AND ARG-453</scope>
</reference>
<reference key="11">
    <citation type="journal article" date="2001" name="EMBO J.">
        <title>Crystal structures of two human pyrophosphorylase isoforms in complexes with UDPGlc(Gal)NAc: role of the alternatively spliced insert in the enzyme oligomeric assembly and active site architecture.</title>
        <authorList>
            <person name="Peneff C."/>
            <person name="Ferrari P."/>
            <person name="Charrier V."/>
            <person name="Taburet Y."/>
            <person name="Monnier C."/>
            <person name="Zamboni V."/>
            <person name="Winter J."/>
            <person name="Harnois M."/>
            <person name="Fassy F."/>
            <person name="Bourne Y."/>
        </authorList>
    </citation>
    <scope>X-RAY CRYSTALLOGRAPHY (1.9 ANGSTROMS) IN COMPLEX WITH UDP-N-ACETYL-ALPHA-D-GALACTOSAMINE AND UDP-N-ACETYL-ALPHA-D-GLUCOSAMINE</scope>
</reference>
<accession>Q16222</accession>
<accession>B2R6R8</accession>
<accession>Q5VTA9</accession>
<accession>Q5VTB0</accession>
<accession>Q5VTB1</accession>
<accession>Q96GM2</accession>
<sequence length="522" mass="58769">MNINDLKLTLSKAGQEHLLRFWNELEEAQQVELYAELQAMNFEELNFFFQKAIEGFNQSSHQKNVDARMEPVPREVLGSATRDQDQLQAWESEGLFQISQNKVAVLLLAGGQGTRLGVAYPKGMYDVGLPSRKTLFQIQAERILKLQQVAEKYYGNKCIIPWYIMTSGRTMESTKEFFTKHKYFGLKKENVIFFQQGMLPAMSFDGKIILEEKNKVSMAPDGNGGLYRALAAQNIVEDMEQRGIWSIHVYCVDNILVKVADPRFIGFCIQKGADCGAKVVEKTNPTEPVGVVCRVDGVYQVVEYSEISLATAQKRSSDGRLLFNAGNIANHFFTVPFLRDVVNVYEPQLQHHVAQKKIPYVDTQGQLIKPDKPNGIKMEKFVFDIFQFAKKFVVYEVLREDEFSPLKNADSQNGKDNPTTARHALMSLHHCWVLNAGGHFIDENGSRLPAIPRSATNGKSETITADVNHNLKDANDVPIQCEISPLISYAGEGLESYVADKEFHAPLIIDENGVHELVKNGI</sequence>
<protein>
    <recommendedName>
        <fullName evidence="10">UDP-N-acetylhexosamine pyrophosphorylase</fullName>
    </recommendedName>
    <alternativeName>
        <fullName evidence="8">Antigen X</fullName>
        <shortName evidence="8">AGX</shortName>
    </alternativeName>
    <alternativeName>
        <fullName evidence="10">Protein-pyrophosphorylation enzyme</fullName>
        <ecNumber evidence="2">2.7.4.-</ecNumber>
    </alternativeName>
    <alternativeName>
        <fullName>Sperm-associated antigen 2</fullName>
    </alternativeName>
    <alternativeName>
        <fullName evidence="10">UDP-N-acetylgalactosamine pyrophosphorylase</fullName>
        <ecNumber evidence="5">2.7.7.83</ecNumber>
    </alternativeName>
    <alternativeName>
        <fullName evidence="10">UDP-N-acetylglucosamine pyrophosphorylase</fullName>
        <ecNumber evidence="4 5">2.7.7.23</ecNumber>
    </alternativeName>
</protein>
<name>UAP1_HUMAN</name>
<organism>
    <name type="scientific">Homo sapiens</name>
    <name type="common">Human</name>
    <dbReference type="NCBI Taxonomy" id="9606"/>
    <lineage>
        <taxon>Eukaryota</taxon>
        <taxon>Metazoa</taxon>
        <taxon>Chordata</taxon>
        <taxon>Craniata</taxon>
        <taxon>Vertebrata</taxon>
        <taxon>Euteleostomi</taxon>
        <taxon>Mammalia</taxon>
        <taxon>Eutheria</taxon>
        <taxon>Euarchontoglires</taxon>
        <taxon>Primates</taxon>
        <taxon>Haplorrhini</taxon>
        <taxon>Catarrhini</taxon>
        <taxon>Hominidae</taxon>
        <taxon>Homo</taxon>
    </lineage>
</organism>
<proteinExistence type="evidence at protein level"/>
<gene>
    <name evidence="9 11" type="primary">UAP1</name>
    <name type="synonym">SPAG2</name>
</gene>
<feature type="chain" id="PRO_0000185767" description="UDP-N-acetylhexosamine pyrophosphorylase">
    <location>
        <begin position="1"/>
        <end position="522"/>
    </location>
</feature>
<feature type="binding site" evidence="1 13 15">
    <location>
        <position position="108"/>
    </location>
    <ligand>
        <name>UDP-N-acetyl-alpha-D-galactosamine</name>
        <dbReference type="ChEBI" id="CHEBI:67138"/>
        <label>1</label>
    </ligand>
</feature>
<feature type="binding site" evidence="1 12 14">
    <location>
        <position position="108"/>
    </location>
    <ligand>
        <name>UDP-N-acetyl-alpha-D-glucosamine</name>
        <dbReference type="ChEBI" id="CHEBI:57705"/>
        <label>1</label>
    </ligand>
</feature>
<feature type="binding site" evidence="1 13 15">
    <location>
        <position position="110"/>
    </location>
    <ligand>
        <name>UDP-N-acetyl-alpha-D-galactosamine</name>
        <dbReference type="ChEBI" id="CHEBI:67138"/>
        <label>1</label>
    </ligand>
</feature>
<feature type="binding site" evidence="1 12 14">
    <location>
        <position position="110"/>
    </location>
    <ligand>
        <name>UDP-N-acetyl-alpha-D-glucosamine</name>
        <dbReference type="ChEBI" id="CHEBI:57705"/>
        <label>1</label>
    </ligand>
</feature>
<feature type="binding site" evidence="1 13 15">
    <location>
        <position position="111"/>
    </location>
    <ligand>
        <name>UDP-N-acetyl-alpha-D-galactosamine</name>
        <dbReference type="ChEBI" id="CHEBI:67138"/>
        <label>1</label>
    </ligand>
</feature>
<feature type="binding site" evidence="1 12 14">
    <location>
        <position position="111"/>
    </location>
    <ligand>
        <name>UDP-N-acetyl-alpha-D-glucosamine</name>
        <dbReference type="ChEBI" id="CHEBI:57705"/>
        <label>1</label>
    </ligand>
</feature>
<feature type="binding site" evidence="1 13 15">
    <location>
        <position position="196"/>
    </location>
    <ligand>
        <name>UDP-N-acetyl-alpha-D-galactosamine</name>
        <dbReference type="ChEBI" id="CHEBI:67138"/>
        <label>1</label>
    </ligand>
</feature>
<feature type="binding site" evidence="1 12 14">
    <location>
        <position position="196"/>
    </location>
    <ligand>
        <name>UDP-N-acetyl-alpha-D-glucosamine</name>
        <dbReference type="ChEBI" id="CHEBI:57705"/>
        <label>1</label>
    </ligand>
</feature>
<feature type="binding site" evidence="1 13 15">
    <location>
        <position position="222"/>
    </location>
    <ligand>
        <name>UDP-N-acetyl-alpha-D-galactosamine</name>
        <dbReference type="ChEBI" id="CHEBI:67138"/>
        <label>1</label>
    </ligand>
</feature>
<feature type="binding site" evidence="1 12 14">
    <location>
        <position position="222"/>
    </location>
    <ligand>
        <name>UDP-N-acetyl-alpha-D-glucosamine</name>
        <dbReference type="ChEBI" id="CHEBI:57705"/>
        <label>1</label>
    </ligand>
</feature>
<feature type="binding site" evidence="1 13 15">
    <location>
        <position position="223"/>
    </location>
    <ligand>
        <name>UDP-N-acetyl-alpha-D-galactosamine</name>
        <dbReference type="ChEBI" id="CHEBI:67138"/>
        <label>1</label>
    </ligand>
</feature>
<feature type="binding site" evidence="1 12 14">
    <location>
        <position position="223"/>
    </location>
    <ligand>
        <name>UDP-N-acetyl-alpha-D-glucosamine</name>
        <dbReference type="ChEBI" id="CHEBI:57705"/>
        <label>1</label>
    </ligand>
</feature>
<feature type="binding site" evidence="1 13 15">
    <location>
        <position position="251"/>
    </location>
    <ligand>
        <name>UDP-N-acetyl-alpha-D-galactosamine</name>
        <dbReference type="ChEBI" id="CHEBI:67138"/>
        <label>1</label>
    </ligand>
</feature>
<feature type="binding site" evidence="1 12">
    <location>
        <position position="251"/>
    </location>
    <ligand>
        <name>UDP-N-acetyl-alpha-D-glucosamine</name>
        <dbReference type="ChEBI" id="CHEBI:57705"/>
        <label>1</label>
    </ligand>
</feature>
<feature type="binding site" evidence="1 13 15">
    <location>
        <position position="252"/>
    </location>
    <ligand>
        <name>UDP-N-acetyl-alpha-D-galactosamine</name>
        <dbReference type="ChEBI" id="CHEBI:67138"/>
        <label>1</label>
    </ligand>
</feature>
<feature type="binding site" evidence="1 12 14">
    <location>
        <position position="252"/>
    </location>
    <ligand>
        <name>UDP-N-acetyl-alpha-D-glucosamine</name>
        <dbReference type="ChEBI" id="CHEBI:57705"/>
        <label>1</label>
    </ligand>
</feature>
<feature type="binding site" evidence="1 13 15">
    <location>
        <position position="290"/>
    </location>
    <ligand>
        <name>UDP-N-acetyl-alpha-D-galactosamine</name>
        <dbReference type="ChEBI" id="CHEBI:67138"/>
        <label>1</label>
    </ligand>
</feature>
<feature type="binding site" evidence="1 12 14">
    <location>
        <position position="290"/>
    </location>
    <ligand>
        <name>UDP-N-acetyl-alpha-D-glucosamine</name>
        <dbReference type="ChEBI" id="CHEBI:57705"/>
        <label>1</label>
    </ligand>
</feature>
<feature type="binding site" evidence="1 13 15">
    <location>
        <position position="303"/>
    </location>
    <ligand>
        <name>UDP-N-acetyl-alpha-D-galactosamine</name>
        <dbReference type="ChEBI" id="CHEBI:67138"/>
        <label>1</label>
    </ligand>
</feature>
<feature type="binding site" evidence="1 12 14">
    <location>
        <position position="303"/>
    </location>
    <ligand>
        <name>UDP-N-acetyl-alpha-D-glucosamine</name>
        <dbReference type="ChEBI" id="CHEBI:57705"/>
        <label>1</label>
    </ligand>
</feature>
<feature type="binding site" evidence="1 13 15">
    <location>
        <position position="304"/>
    </location>
    <ligand>
        <name>UDP-N-acetyl-alpha-D-galactosamine</name>
        <dbReference type="ChEBI" id="CHEBI:67138"/>
        <label>1</label>
    </ligand>
</feature>
<feature type="binding site" evidence="1 12 14">
    <location>
        <position position="304"/>
    </location>
    <ligand>
        <name>UDP-N-acetyl-alpha-D-glucosamine</name>
        <dbReference type="ChEBI" id="CHEBI:57705"/>
        <label>1</label>
    </ligand>
</feature>
<feature type="binding site" evidence="1 13 15">
    <location>
        <position position="327"/>
    </location>
    <ligand>
        <name>UDP-N-acetyl-alpha-D-galactosamine</name>
        <dbReference type="ChEBI" id="CHEBI:67138"/>
        <label>1</label>
    </ligand>
</feature>
<feature type="binding site" evidence="1 12 14">
    <location>
        <position position="327"/>
    </location>
    <ligand>
        <name>UDP-N-acetyl-alpha-D-glucosamine</name>
        <dbReference type="ChEBI" id="CHEBI:57705"/>
        <label>1</label>
    </ligand>
</feature>
<feature type="binding site" evidence="1 14">
    <location>
        <position position="381"/>
    </location>
    <ligand>
        <name>UDP-N-acetyl-alpha-D-glucosamine</name>
        <dbReference type="ChEBI" id="CHEBI:57705"/>
        <label>1</label>
    </ligand>
</feature>
<feature type="binding site" evidence="1 13 15">
    <location>
        <position position="407"/>
    </location>
    <ligand>
        <name>UDP-N-acetyl-alpha-D-galactosamine</name>
        <dbReference type="ChEBI" id="CHEBI:67138"/>
        <label>1</label>
    </ligand>
</feature>
<feature type="binding site" evidence="12 14">
    <location>
        <position position="407"/>
    </location>
    <ligand>
        <name>UDP-N-acetyl-alpha-D-glucosamine</name>
        <dbReference type="ChEBI" id="CHEBI:57705"/>
        <label>1</label>
    </ligand>
</feature>
<feature type="binding site" evidence="1 13">
    <location>
        <position position="472"/>
    </location>
    <ligand>
        <name>UDP-N-acetyl-alpha-D-galactosamine</name>
        <dbReference type="ChEBI" id="CHEBI:67138"/>
        <label>2</label>
    </ligand>
</feature>
<feature type="binding site" evidence="1 12">
    <location>
        <position position="472"/>
    </location>
    <ligand>
        <name>UDP-N-acetyl-alpha-D-glucosamine</name>
        <dbReference type="ChEBI" id="CHEBI:57705"/>
        <label>2</label>
    </ligand>
</feature>
<feature type="splice variant" id="VSP_004483" description="In isoform AGX1." evidence="6 7 8 9">
    <location>
        <begin position="454"/>
        <end position="470"/>
    </location>
</feature>
<feature type="splice variant" id="VSP_014523" description="In isoform 3." evidence="8">
    <location>
        <position position="454"/>
    </location>
</feature>
<feature type="sequence variant" id="VAR_014935" description="In dbSNP:rs1128539.">
    <original>P</original>
    <variation>H</variation>
    <location>
        <position position="418"/>
    </location>
</feature>
<feature type="mutagenesis site" description="Abolished UDP-N-acetylhexosamine pyrophosphorylase and protein-pyrophosphorylation activities." evidence="2">
    <original>RLGVAYPK</original>
    <variation>ALGVAYPA</variation>
    <location>
        <begin position="115"/>
        <end position="122"/>
    </location>
</feature>
<feature type="mutagenesis site" description="Abolished UDP-N-acetylhexosamine pyrophosphorylase and protein-pyrophosphorylation activities." evidence="2">
    <original>K</original>
    <variation>A</variation>
    <location>
        <position position="407"/>
    </location>
</feature>
<feature type="mutagenesis site" description="Decreased interaction with IRF3, leading to decreased pyrophosphorylation of IRF3." evidence="2">
    <original>R</original>
    <variation>A</variation>
    <location>
        <position position="453"/>
    </location>
</feature>
<feature type="sequence conflict" description="In Ref. 6; AAH09377." evidence="10" ref="6">
    <original>H</original>
    <variation>Y</variation>
    <location>
        <position position="61"/>
    </location>
</feature>
<feature type="sequence conflict" description="In Ref. 1; AAB31210 and 2; BAA31202." evidence="10" ref="1 2">
    <original>G</original>
    <variation>S</variation>
    <location>
        <position position="445"/>
    </location>
</feature>
<feature type="helix" evidence="17">
    <location>
        <begin position="3"/>
        <end position="12"/>
    </location>
</feature>
<feature type="helix" evidence="17">
    <location>
        <begin position="16"/>
        <end position="19"/>
    </location>
</feature>
<feature type="helix" evidence="17">
    <location>
        <begin position="22"/>
        <end position="24"/>
    </location>
</feature>
<feature type="helix" evidence="17">
    <location>
        <begin position="27"/>
        <end position="38"/>
    </location>
</feature>
<feature type="helix" evidence="17">
    <location>
        <begin position="42"/>
        <end position="52"/>
    </location>
</feature>
<feature type="helix" evidence="17">
    <location>
        <begin position="66"/>
        <end position="68"/>
    </location>
</feature>
<feature type="helix" evidence="16">
    <location>
        <begin position="74"/>
        <end position="76"/>
    </location>
</feature>
<feature type="strand" evidence="16">
    <location>
        <begin position="77"/>
        <end position="79"/>
    </location>
</feature>
<feature type="turn" evidence="16">
    <location>
        <begin position="80"/>
        <end position="83"/>
    </location>
</feature>
<feature type="helix" evidence="16">
    <location>
        <begin position="84"/>
        <end position="86"/>
    </location>
</feature>
<feature type="helix" evidence="17">
    <location>
        <begin position="87"/>
        <end position="99"/>
    </location>
</feature>
<feature type="strand" evidence="17">
    <location>
        <begin position="103"/>
        <end position="108"/>
    </location>
</feature>
<feature type="helix" evidence="17">
    <location>
        <begin position="114"/>
        <end position="116"/>
    </location>
</feature>
<feature type="strand" evidence="17">
    <location>
        <begin position="119"/>
        <end position="121"/>
    </location>
</feature>
<feature type="helix" evidence="17">
    <location>
        <begin position="122"/>
        <end position="124"/>
    </location>
</feature>
<feature type="helix" evidence="17">
    <location>
        <begin position="135"/>
        <end position="154"/>
    </location>
</feature>
<feature type="strand" evidence="17">
    <location>
        <begin position="162"/>
        <end position="166"/>
    </location>
</feature>
<feature type="turn" evidence="16">
    <location>
        <begin position="168"/>
        <end position="170"/>
    </location>
</feature>
<feature type="helix" evidence="17">
    <location>
        <begin position="171"/>
        <end position="180"/>
    </location>
</feature>
<feature type="helix" evidence="17">
    <location>
        <begin position="182"/>
        <end position="185"/>
    </location>
</feature>
<feature type="helix" evidence="17">
    <location>
        <begin position="188"/>
        <end position="190"/>
    </location>
</feature>
<feature type="strand" evidence="17">
    <location>
        <begin position="191"/>
        <end position="195"/>
    </location>
</feature>
<feature type="strand" evidence="17">
    <location>
        <begin position="198"/>
        <end position="200"/>
    </location>
</feature>
<feature type="strand" evidence="17">
    <location>
        <begin position="210"/>
        <end position="212"/>
    </location>
</feature>
<feature type="strand" evidence="17">
    <location>
        <begin position="218"/>
        <end position="220"/>
    </location>
</feature>
<feature type="helix" evidence="17">
    <location>
        <begin position="223"/>
        <end position="225"/>
    </location>
</feature>
<feature type="helix" evidence="17">
    <location>
        <begin position="226"/>
        <end position="232"/>
    </location>
</feature>
<feature type="helix" evidence="17">
    <location>
        <begin position="235"/>
        <end position="242"/>
    </location>
</feature>
<feature type="strand" evidence="17">
    <location>
        <begin position="246"/>
        <end position="251"/>
    </location>
</feature>
<feature type="helix" evidence="17">
    <location>
        <begin position="262"/>
        <end position="271"/>
    </location>
</feature>
<feature type="strand" evidence="17">
    <location>
        <begin position="274"/>
        <end position="281"/>
    </location>
</feature>
<feature type="strand" evidence="17">
    <location>
        <begin position="291"/>
        <end position="294"/>
    </location>
</feature>
<feature type="strand" evidence="17">
    <location>
        <begin position="299"/>
        <end position="302"/>
    </location>
</feature>
<feature type="helix" evidence="17">
    <location>
        <begin position="304"/>
        <end position="306"/>
    </location>
</feature>
<feature type="helix" evidence="17">
    <location>
        <begin position="309"/>
        <end position="313"/>
    </location>
</feature>
<feature type="strand" evidence="17">
    <location>
        <begin position="319"/>
        <end position="323"/>
    </location>
</feature>
<feature type="strand" evidence="17">
    <location>
        <begin position="325"/>
        <end position="334"/>
    </location>
</feature>
<feature type="helix" evidence="17">
    <location>
        <begin position="335"/>
        <end position="343"/>
    </location>
</feature>
<feature type="helix" evidence="17">
    <location>
        <begin position="346"/>
        <end position="348"/>
    </location>
</feature>
<feature type="strand" evidence="17">
    <location>
        <begin position="352"/>
        <end position="356"/>
    </location>
</feature>
<feature type="strand" evidence="17">
    <location>
        <begin position="375"/>
        <end position="379"/>
    </location>
</feature>
<feature type="helix" evidence="17">
    <location>
        <begin position="382"/>
        <end position="388"/>
    </location>
</feature>
<feature type="strand" evidence="17">
    <location>
        <begin position="390"/>
        <end position="396"/>
    </location>
</feature>
<feature type="helix" evidence="17">
    <location>
        <begin position="399"/>
        <end position="402"/>
    </location>
</feature>
<feature type="strand" evidence="17">
    <location>
        <begin position="412"/>
        <end position="417"/>
    </location>
</feature>
<feature type="helix" evidence="17">
    <location>
        <begin position="418"/>
        <end position="435"/>
    </location>
</feature>
<feature type="strand" evidence="17">
    <location>
        <begin position="439"/>
        <end position="441"/>
    </location>
</feature>
<feature type="strand" evidence="17">
    <location>
        <begin position="481"/>
        <end position="483"/>
    </location>
</feature>
<feature type="turn" evidence="17">
    <location>
        <begin position="485"/>
        <end position="487"/>
    </location>
</feature>
<feature type="strand" evidence="17">
    <location>
        <begin position="489"/>
        <end position="491"/>
    </location>
</feature>
<feature type="helix" evidence="17">
    <location>
        <begin position="495"/>
        <end position="498"/>
    </location>
</feature>
<feature type="strand" evidence="17">
    <location>
        <begin position="505"/>
        <end position="510"/>
    </location>
</feature>
<feature type="strand" evidence="17">
    <location>
        <begin position="513"/>
        <end position="516"/>
    </location>
</feature>
<dbReference type="EC" id="2.7.4.-" evidence="2"/>
<dbReference type="EC" id="2.7.7.83" evidence="5"/>
<dbReference type="EC" id="2.7.7.23" evidence="4 5"/>
<dbReference type="EMBL" id="S73498">
    <property type="protein sequence ID" value="AAB31210.2"/>
    <property type="molecule type" value="mRNA"/>
</dbReference>
<dbReference type="EMBL" id="AB011004">
    <property type="protein sequence ID" value="BAA31202.1"/>
    <property type="molecule type" value="mRNA"/>
</dbReference>
<dbReference type="EMBL" id="AK312685">
    <property type="protein sequence ID" value="BAG35565.1"/>
    <property type="molecule type" value="mRNA"/>
</dbReference>
<dbReference type="EMBL" id="AL596325">
    <property type="status" value="NOT_ANNOTATED_CDS"/>
    <property type="molecule type" value="Genomic_DNA"/>
</dbReference>
<dbReference type="EMBL" id="CH471067">
    <property type="protein sequence ID" value="EAW90710.1"/>
    <property type="molecule type" value="Genomic_DNA"/>
</dbReference>
<dbReference type="EMBL" id="BC009377">
    <property type="protein sequence ID" value="AAH09377.1"/>
    <property type="molecule type" value="mRNA"/>
</dbReference>
<dbReference type="CCDS" id="CCDS1240.1">
    <molecule id="Q16222-2"/>
</dbReference>
<dbReference type="CCDS" id="CCDS81393.1">
    <molecule id="Q16222-1"/>
</dbReference>
<dbReference type="RefSeq" id="NP_001311042.1">
    <molecule id="Q16222-2"/>
    <property type="nucleotide sequence ID" value="NM_001324113.2"/>
</dbReference>
<dbReference type="RefSeq" id="NP_001311043.1">
    <molecule id="Q16222-2"/>
    <property type="nucleotide sequence ID" value="NM_001324114.2"/>
</dbReference>
<dbReference type="RefSeq" id="NP_001311044.1">
    <molecule id="Q16222-2"/>
    <property type="nucleotide sequence ID" value="NM_001324115.3"/>
</dbReference>
<dbReference type="RefSeq" id="NP_001311045.1">
    <molecule id="Q16222-1"/>
    <property type="nucleotide sequence ID" value="NM_001324116.5"/>
</dbReference>
<dbReference type="RefSeq" id="NP_001311046.1">
    <molecule id="Q16222-3"/>
    <property type="nucleotide sequence ID" value="NM_001324117.3"/>
</dbReference>
<dbReference type="RefSeq" id="NP_001375330.1">
    <molecule id="Q16222-1"/>
    <property type="nucleotide sequence ID" value="NM_001388401.1"/>
</dbReference>
<dbReference type="RefSeq" id="NP_001375331.1">
    <molecule id="Q16222-1"/>
    <property type="nucleotide sequence ID" value="NM_001388402.1"/>
</dbReference>
<dbReference type="RefSeq" id="NP_001386719.1">
    <molecule id="Q16222-2"/>
    <property type="nucleotide sequence ID" value="NM_001399790.1"/>
</dbReference>
<dbReference type="RefSeq" id="NP_001386720.1">
    <molecule id="Q16222-1"/>
    <property type="nucleotide sequence ID" value="NM_001399791.1"/>
</dbReference>
<dbReference type="RefSeq" id="NP_003106.3">
    <molecule id="Q16222-2"/>
    <property type="nucleotide sequence ID" value="NM_003115.4"/>
</dbReference>
<dbReference type="RefSeq" id="XP_011508215.1">
    <property type="nucleotide sequence ID" value="XM_011509913.2"/>
</dbReference>
<dbReference type="RefSeq" id="XP_011508216.1">
    <property type="nucleotide sequence ID" value="XM_011509914.2"/>
</dbReference>
<dbReference type="RefSeq" id="XP_047284799.1">
    <molecule id="Q16222-1"/>
    <property type="nucleotide sequence ID" value="XM_047428843.1"/>
</dbReference>
<dbReference type="RefSeq" id="XP_047284801.1">
    <molecule id="Q16222-3"/>
    <property type="nucleotide sequence ID" value="XM_047428845.1"/>
</dbReference>
<dbReference type="RefSeq" id="XP_047284804.1">
    <molecule id="Q16222-3"/>
    <property type="nucleotide sequence ID" value="XM_047428848.1"/>
</dbReference>
<dbReference type="RefSeq" id="XP_047284805.1">
    <molecule id="Q16222-3"/>
    <property type="nucleotide sequence ID" value="XM_047428849.1"/>
</dbReference>
<dbReference type="RefSeq" id="XP_054194434.1">
    <molecule id="Q16222-1"/>
    <property type="nucleotide sequence ID" value="XM_054338459.1"/>
</dbReference>
<dbReference type="RefSeq" id="XP_054194435.1">
    <molecule id="Q16222-3"/>
    <property type="nucleotide sequence ID" value="XM_054338460.1"/>
</dbReference>
<dbReference type="RefSeq" id="XP_054194436.1">
    <molecule id="Q16222-3"/>
    <property type="nucleotide sequence ID" value="XM_054338461.1"/>
</dbReference>
<dbReference type="RefSeq" id="XP_054194437.1">
    <molecule id="Q16222-3"/>
    <property type="nucleotide sequence ID" value="XM_054338462.1"/>
</dbReference>
<dbReference type="PDB" id="1JV1">
    <property type="method" value="X-ray"/>
    <property type="resolution" value="1.90 A"/>
    <property type="chains" value="A/B=1-522"/>
</dbReference>
<dbReference type="PDB" id="1JV3">
    <property type="method" value="X-ray"/>
    <property type="resolution" value="2.20 A"/>
    <property type="chains" value="A/B=1-522"/>
</dbReference>
<dbReference type="PDB" id="1JVD">
    <property type="method" value="X-ray"/>
    <property type="resolution" value="2.40 A"/>
    <property type="chains" value="A/B=1-522"/>
</dbReference>
<dbReference type="PDB" id="1JVG">
    <property type="method" value="X-ray"/>
    <property type="resolution" value="2.30 A"/>
    <property type="chains" value="A/B=1-522"/>
</dbReference>
<dbReference type="PDB" id="6Z2F">
    <property type="method" value="X-ray"/>
    <property type="resolution" value="1.70 A"/>
    <property type="chains" value="A/B=1-522"/>
</dbReference>
<dbReference type="PDB" id="8QH2">
    <property type="method" value="X-ray"/>
    <property type="resolution" value="2.75 A"/>
    <property type="chains" value="A=1-56"/>
</dbReference>
<dbReference type="PDBsum" id="1JV1"/>
<dbReference type="PDBsum" id="1JV3"/>
<dbReference type="PDBsum" id="1JVD"/>
<dbReference type="PDBsum" id="1JVG"/>
<dbReference type="PDBsum" id="6Z2F"/>
<dbReference type="PDBsum" id="8QH2"/>
<dbReference type="SMR" id="Q16222"/>
<dbReference type="BioGRID" id="112557">
    <property type="interactions" value="49"/>
</dbReference>
<dbReference type="FunCoup" id="Q16222">
    <property type="interactions" value="2535"/>
</dbReference>
<dbReference type="IntAct" id="Q16222">
    <property type="interactions" value="17"/>
</dbReference>
<dbReference type="STRING" id="9606.ENSP00000271469"/>
<dbReference type="DrugBank" id="DB02196">
    <property type="generic name" value="Uridine-Diphosphate-N-Acetylgalactosamine"/>
</dbReference>
<dbReference type="DrugBank" id="DB03397">
    <property type="generic name" value="Uridine-Diphosphate-N-Acetylglucosamine"/>
</dbReference>
<dbReference type="GlyGen" id="Q16222">
    <property type="glycosylation" value="2 sites, 1 O-linked glycan (1 site)"/>
</dbReference>
<dbReference type="iPTMnet" id="Q16222"/>
<dbReference type="MetOSite" id="Q16222"/>
<dbReference type="PhosphoSitePlus" id="Q16222"/>
<dbReference type="BioMuta" id="UAP1"/>
<dbReference type="DMDM" id="68846235"/>
<dbReference type="REPRODUCTION-2DPAGE" id="IPI00217816"/>
<dbReference type="jPOST" id="Q16222"/>
<dbReference type="MassIVE" id="Q16222"/>
<dbReference type="PaxDb" id="9606-ENSP00000356903"/>
<dbReference type="PeptideAtlas" id="Q16222"/>
<dbReference type="ProteomicsDB" id="60840">
    <molecule id="Q16222-1"/>
</dbReference>
<dbReference type="ProteomicsDB" id="60841">
    <molecule id="Q16222-2"/>
</dbReference>
<dbReference type="ProteomicsDB" id="60842">
    <molecule id="Q16222-3"/>
</dbReference>
<dbReference type="Pumba" id="Q16222"/>
<dbReference type="Antibodypedia" id="1654">
    <property type="antibodies" value="259 antibodies from 30 providers"/>
</dbReference>
<dbReference type="DNASU" id="6675"/>
<dbReference type="Ensembl" id="ENST00000367925.6">
    <molecule id="Q16222-1"/>
    <property type="protein sequence ID" value="ENSP00000356902.1"/>
    <property type="gene ID" value="ENSG00000117143.14"/>
</dbReference>
<dbReference type="Ensembl" id="ENST00000367926.9">
    <molecule id="Q16222-2"/>
    <property type="protein sequence ID" value="ENSP00000356903.4"/>
    <property type="gene ID" value="ENSG00000117143.14"/>
</dbReference>
<dbReference type="GeneID" id="6675"/>
<dbReference type="KEGG" id="hsa:6675"/>
<dbReference type="MANE-Select" id="ENST00000367925.6">
    <property type="protein sequence ID" value="ENSP00000356902.1"/>
    <property type="RefSeq nucleotide sequence ID" value="NM_001324116.5"/>
    <property type="RefSeq protein sequence ID" value="NP_001311045.1"/>
</dbReference>
<dbReference type="UCSC" id="uc001gce.5">
    <molecule id="Q16222-1"/>
    <property type="organism name" value="human"/>
</dbReference>
<dbReference type="AGR" id="HGNC:12457"/>
<dbReference type="CTD" id="6675"/>
<dbReference type="DisGeNET" id="6675"/>
<dbReference type="GeneCards" id="UAP1"/>
<dbReference type="HGNC" id="HGNC:12457">
    <property type="gene designation" value="UAP1"/>
</dbReference>
<dbReference type="HPA" id="ENSG00000117143">
    <property type="expression patterns" value="Tissue enhanced (liver)"/>
</dbReference>
<dbReference type="MIM" id="602862">
    <property type="type" value="gene"/>
</dbReference>
<dbReference type="neXtProt" id="NX_Q16222"/>
<dbReference type="OpenTargets" id="ENSG00000117143"/>
<dbReference type="PharmGKB" id="PA37107"/>
<dbReference type="VEuPathDB" id="HostDB:ENSG00000117143"/>
<dbReference type="eggNOG" id="KOG2388">
    <property type="taxonomic scope" value="Eukaryota"/>
</dbReference>
<dbReference type="GeneTree" id="ENSGT00940000153464"/>
<dbReference type="HOGENOM" id="CLU_025603_1_0_1"/>
<dbReference type="InParanoid" id="Q16222"/>
<dbReference type="OMA" id="YFQVDNP"/>
<dbReference type="OrthoDB" id="532420at2759"/>
<dbReference type="PAN-GO" id="Q16222">
    <property type="GO annotations" value="2 GO annotations based on evolutionary models"/>
</dbReference>
<dbReference type="PhylomeDB" id="Q16222"/>
<dbReference type="TreeFam" id="TF300611"/>
<dbReference type="BRENDA" id="2.7.7.23">
    <property type="organism ID" value="2681"/>
</dbReference>
<dbReference type="BRENDA" id="2.7.7.83">
    <property type="organism ID" value="2681"/>
</dbReference>
<dbReference type="PathwayCommons" id="Q16222"/>
<dbReference type="Reactome" id="R-HSA-446210">
    <property type="pathway name" value="Synthesis of UDP-N-acetyl-glucosamine"/>
</dbReference>
<dbReference type="SABIO-RK" id="Q16222"/>
<dbReference type="SignaLink" id="Q16222"/>
<dbReference type="UniPathway" id="UPA00113">
    <property type="reaction ID" value="UER00533"/>
</dbReference>
<dbReference type="BioGRID-ORCS" id="6675">
    <property type="hits" value="109 hits in 1168 CRISPR screens"/>
</dbReference>
<dbReference type="ChiTaRS" id="UAP1">
    <property type="organism name" value="human"/>
</dbReference>
<dbReference type="EvolutionaryTrace" id="Q16222"/>
<dbReference type="GeneWiki" id="UAP1"/>
<dbReference type="GenomeRNAi" id="6675"/>
<dbReference type="Pharos" id="Q16222">
    <property type="development level" value="Tbio"/>
</dbReference>
<dbReference type="PRO" id="PR:Q16222"/>
<dbReference type="Proteomes" id="UP000005640">
    <property type="component" value="Chromosome 1"/>
</dbReference>
<dbReference type="RNAct" id="Q16222">
    <property type="molecule type" value="protein"/>
</dbReference>
<dbReference type="Bgee" id="ENSG00000117143">
    <property type="expression patterns" value="Expressed in synovial joint and 210 other cell types or tissues"/>
</dbReference>
<dbReference type="ExpressionAtlas" id="Q16222">
    <property type="expression patterns" value="baseline and differential"/>
</dbReference>
<dbReference type="GO" id="GO:0005829">
    <property type="term" value="C:cytosol"/>
    <property type="evidence" value="ECO:0000314"/>
    <property type="project" value="HPA"/>
</dbReference>
<dbReference type="GO" id="GO:0005654">
    <property type="term" value="C:nucleoplasm"/>
    <property type="evidence" value="ECO:0000314"/>
    <property type="project" value="HPA"/>
</dbReference>
<dbReference type="GO" id="GO:0005886">
    <property type="term" value="C:plasma membrane"/>
    <property type="evidence" value="ECO:0000314"/>
    <property type="project" value="HPA"/>
</dbReference>
<dbReference type="GO" id="GO:0042802">
    <property type="term" value="F:identical protein binding"/>
    <property type="evidence" value="ECO:0000353"/>
    <property type="project" value="IntAct"/>
</dbReference>
<dbReference type="GO" id="GO:0141090">
    <property type="term" value="F:protein serine pyrophosphorylase activity"/>
    <property type="evidence" value="ECO:0000314"/>
    <property type="project" value="UniProt"/>
</dbReference>
<dbReference type="GO" id="GO:0052630">
    <property type="term" value="F:UDP-N-acetylgalactosamine diphosphorylase activity"/>
    <property type="evidence" value="ECO:0007669"/>
    <property type="project" value="UniProtKB-EC"/>
</dbReference>
<dbReference type="GO" id="GO:0003977">
    <property type="term" value="F:UDP-N-acetylglucosamine diphosphorylase activity"/>
    <property type="evidence" value="ECO:0000318"/>
    <property type="project" value="GO_Central"/>
</dbReference>
<dbReference type="GO" id="GO:0140374">
    <property type="term" value="P:antiviral innate immune response"/>
    <property type="evidence" value="ECO:0000314"/>
    <property type="project" value="UniProt"/>
</dbReference>
<dbReference type="GO" id="GO:0032481">
    <property type="term" value="P:positive regulation of type I interferon production"/>
    <property type="evidence" value="ECO:0000314"/>
    <property type="project" value="UniProt"/>
</dbReference>
<dbReference type="GO" id="GO:0006048">
    <property type="term" value="P:UDP-N-acetylglucosamine biosynthetic process"/>
    <property type="evidence" value="ECO:0000318"/>
    <property type="project" value="GO_Central"/>
</dbReference>
<dbReference type="CDD" id="cd04193">
    <property type="entry name" value="UDPGlcNAc_PPase"/>
    <property type="match status" value="1"/>
</dbReference>
<dbReference type="DisProt" id="DP00363"/>
<dbReference type="DisProt" id="DP01098">
    <molecule id="Q16222-2"/>
</dbReference>
<dbReference type="FunFam" id="2.10.10.100:FF:000001">
    <property type="entry name" value="UDP-N-acetylhexosamine pyrophosphorylase isoform X1"/>
    <property type="match status" value="1"/>
</dbReference>
<dbReference type="FunFam" id="3.90.550.10:FF:000043">
    <property type="entry name" value="UDP-N-acetylhexosamine pyrophosphorylase isoform X2"/>
    <property type="match status" value="1"/>
</dbReference>
<dbReference type="Gene3D" id="2.10.10.100">
    <property type="match status" value="1"/>
</dbReference>
<dbReference type="Gene3D" id="3.90.550.10">
    <property type="entry name" value="Spore Coat Polysaccharide Biosynthesis Protein SpsA, Chain A"/>
    <property type="match status" value="1"/>
</dbReference>
<dbReference type="InterPro" id="IPR029044">
    <property type="entry name" value="Nucleotide-diphossugar_trans"/>
</dbReference>
<dbReference type="InterPro" id="IPR039741">
    <property type="entry name" value="UDP-sugar_pyrophosphorylase"/>
</dbReference>
<dbReference type="InterPro" id="IPR002618">
    <property type="entry name" value="UDPGP_fam"/>
</dbReference>
<dbReference type="PANTHER" id="PTHR11952">
    <property type="entry name" value="UDP- GLUCOSE PYROPHOSPHORYLASE"/>
    <property type="match status" value="1"/>
</dbReference>
<dbReference type="PANTHER" id="PTHR11952:SF4">
    <property type="entry name" value="UDP-N-ACETYLHEXOSAMINE PYROPHOSPHORYLASE"/>
    <property type="match status" value="1"/>
</dbReference>
<dbReference type="Pfam" id="PF01704">
    <property type="entry name" value="UDPGP"/>
    <property type="match status" value="1"/>
</dbReference>
<dbReference type="SUPFAM" id="SSF53448">
    <property type="entry name" value="Nucleotide-diphospho-sugar transferases"/>
    <property type="match status" value="1"/>
</dbReference>
<evidence type="ECO:0000269" key="1">
    <source>
    </source>
</evidence>
<evidence type="ECO:0000269" key="2">
    <source>
    </source>
</evidence>
<evidence type="ECO:0000269" key="3">
    <source>
    </source>
</evidence>
<evidence type="ECO:0000269" key="4">
    <source>
    </source>
</evidence>
<evidence type="ECO:0000269" key="5">
    <source>
    </source>
</evidence>
<evidence type="ECO:0000303" key="6">
    <source>
    </source>
</evidence>
<evidence type="ECO:0000303" key="7">
    <source>
    </source>
</evidence>
<evidence type="ECO:0000303" key="8">
    <source>
    </source>
</evidence>
<evidence type="ECO:0000303" key="9">
    <source>
    </source>
</evidence>
<evidence type="ECO:0000305" key="10"/>
<evidence type="ECO:0000312" key="11">
    <source>
        <dbReference type="HGNC" id="HGNC:12457"/>
    </source>
</evidence>
<evidence type="ECO:0007744" key="12">
    <source>
        <dbReference type="PDB" id="1JV1"/>
    </source>
</evidence>
<evidence type="ECO:0007744" key="13">
    <source>
        <dbReference type="PDB" id="1JV3"/>
    </source>
</evidence>
<evidence type="ECO:0007744" key="14">
    <source>
        <dbReference type="PDB" id="1JVD"/>
    </source>
</evidence>
<evidence type="ECO:0007744" key="15">
    <source>
        <dbReference type="PDB" id="1JVG"/>
    </source>
</evidence>
<evidence type="ECO:0007829" key="16">
    <source>
        <dbReference type="PDB" id="1JV1"/>
    </source>
</evidence>
<evidence type="ECO:0007829" key="17">
    <source>
        <dbReference type="PDB" id="6Z2F"/>
    </source>
</evidence>